<gene>
    <name type="ordered locus">Daro_3239</name>
</gene>
<sequence>MNKKLKVAIIGPGNIGTDLMIKIMRHGEHLEMGAMVGIDPQSDGLARAQRMGVATTHEGVEGLTRLPVFADIDIVFDATSAGAHVRNDAFLRSLKPNIRMVDLTPAAIGPYCIPVVNGAAHDEALNVNMVTCGGQATIPMVAAVSRVAKVHYGEIIASISSKSAGPGTRANIDEFTETTSKAIEAVGGAAKGKAIIILNPAEPPLIMRDTVYCLSELVDEDEIAASVAQMAADVQKYVPGYRLKQKVQFDIIPASRPINIPGVGQRMSGLKTSVFLEVEGAAHYLPAYAGNLDIMTSAAKTTAERMAARILSAA</sequence>
<name>ACDH3_DECAR</name>
<proteinExistence type="inferred from homology"/>
<keyword id="KW-0058">Aromatic hydrocarbons catabolism</keyword>
<keyword id="KW-0520">NAD</keyword>
<keyword id="KW-0560">Oxidoreductase</keyword>
<reference key="1">
    <citation type="journal article" date="2009" name="BMC Genomics">
        <title>Metabolic analysis of the soil microbe Dechloromonas aromatica str. RCB: indications of a surprisingly complex life-style and cryptic anaerobic pathways for aromatic degradation.</title>
        <authorList>
            <person name="Salinero K.K."/>
            <person name="Keller K."/>
            <person name="Feil W.S."/>
            <person name="Feil H."/>
            <person name="Trong S."/>
            <person name="Di Bartolo G."/>
            <person name="Lapidus A."/>
        </authorList>
    </citation>
    <scope>NUCLEOTIDE SEQUENCE [LARGE SCALE GENOMIC DNA]</scope>
    <source>
        <strain>RCB</strain>
    </source>
</reference>
<accession>Q47B12</accession>
<feature type="chain" id="PRO_0000337978" description="Acetaldehyde dehydrogenase 3">
    <location>
        <begin position="1"/>
        <end position="314"/>
    </location>
</feature>
<feature type="active site" description="Acyl-thioester intermediate" evidence="1">
    <location>
        <position position="132"/>
    </location>
</feature>
<feature type="binding site" evidence="1">
    <location>
        <begin position="163"/>
        <end position="171"/>
    </location>
    <ligand>
        <name>NAD(+)</name>
        <dbReference type="ChEBI" id="CHEBI:57540"/>
    </ligand>
</feature>
<feature type="binding site" evidence="1">
    <location>
        <position position="291"/>
    </location>
    <ligand>
        <name>NAD(+)</name>
        <dbReference type="ChEBI" id="CHEBI:57540"/>
    </ligand>
</feature>
<dbReference type="EC" id="1.2.1.10" evidence="1"/>
<dbReference type="EMBL" id="CP000089">
    <property type="protein sequence ID" value="AAZ47969.1"/>
    <property type="molecule type" value="Genomic_DNA"/>
</dbReference>
<dbReference type="SMR" id="Q47B12"/>
<dbReference type="STRING" id="159087.Daro_3239"/>
<dbReference type="KEGG" id="dar:Daro_3239"/>
<dbReference type="eggNOG" id="COG4569">
    <property type="taxonomic scope" value="Bacteria"/>
</dbReference>
<dbReference type="HOGENOM" id="CLU_062208_0_0_4"/>
<dbReference type="OrthoDB" id="9786743at2"/>
<dbReference type="GO" id="GO:0008774">
    <property type="term" value="F:acetaldehyde dehydrogenase (acetylating) activity"/>
    <property type="evidence" value="ECO:0007669"/>
    <property type="project" value="UniProtKB-UniRule"/>
</dbReference>
<dbReference type="GO" id="GO:0051287">
    <property type="term" value="F:NAD binding"/>
    <property type="evidence" value="ECO:0007669"/>
    <property type="project" value="UniProtKB-UniRule"/>
</dbReference>
<dbReference type="GO" id="GO:0009056">
    <property type="term" value="P:catabolic process"/>
    <property type="evidence" value="ECO:0007669"/>
    <property type="project" value="UniProtKB-KW"/>
</dbReference>
<dbReference type="CDD" id="cd23933">
    <property type="entry name" value="ALDH_C"/>
    <property type="match status" value="1"/>
</dbReference>
<dbReference type="Gene3D" id="3.30.360.10">
    <property type="entry name" value="Dihydrodipicolinate Reductase, domain 2"/>
    <property type="match status" value="1"/>
</dbReference>
<dbReference type="Gene3D" id="3.40.50.720">
    <property type="entry name" value="NAD(P)-binding Rossmann-like Domain"/>
    <property type="match status" value="1"/>
</dbReference>
<dbReference type="HAMAP" id="MF_01657">
    <property type="entry name" value="Ac_ald_DH_ac"/>
    <property type="match status" value="1"/>
</dbReference>
<dbReference type="InterPro" id="IPR003361">
    <property type="entry name" value="Acetaldehyde_dehydrogenase"/>
</dbReference>
<dbReference type="InterPro" id="IPR015426">
    <property type="entry name" value="Acetylaldehyde_DH_C"/>
</dbReference>
<dbReference type="InterPro" id="IPR036291">
    <property type="entry name" value="NAD(P)-bd_dom_sf"/>
</dbReference>
<dbReference type="InterPro" id="IPR000534">
    <property type="entry name" value="Semialdehyde_DH_NAD-bd"/>
</dbReference>
<dbReference type="NCBIfam" id="TIGR03215">
    <property type="entry name" value="ac_ald_DH_ac"/>
    <property type="match status" value="1"/>
</dbReference>
<dbReference type="NCBIfam" id="NF006157">
    <property type="entry name" value="PRK08300.1"/>
    <property type="match status" value="1"/>
</dbReference>
<dbReference type="Pfam" id="PF09290">
    <property type="entry name" value="AcetDehyd-dimer"/>
    <property type="match status" value="1"/>
</dbReference>
<dbReference type="PIRSF" id="PIRSF015689">
    <property type="entry name" value="Actaldh_dh_actl"/>
    <property type="match status" value="1"/>
</dbReference>
<dbReference type="SMART" id="SM00859">
    <property type="entry name" value="Semialdhyde_dh"/>
    <property type="match status" value="1"/>
</dbReference>
<dbReference type="SUPFAM" id="SSF55347">
    <property type="entry name" value="Glyceraldehyde-3-phosphate dehydrogenase-like, C-terminal domain"/>
    <property type="match status" value="1"/>
</dbReference>
<dbReference type="SUPFAM" id="SSF51735">
    <property type="entry name" value="NAD(P)-binding Rossmann-fold domains"/>
    <property type="match status" value="1"/>
</dbReference>
<evidence type="ECO:0000255" key="1">
    <source>
        <dbReference type="HAMAP-Rule" id="MF_01657"/>
    </source>
</evidence>
<protein>
    <recommendedName>
        <fullName evidence="1">Acetaldehyde dehydrogenase 3</fullName>
        <ecNumber evidence="1">1.2.1.10</ecNumber>
    </recommendedName>
    <alternativeName>
        <fullName evidence="1">Acetaldehyde dehydrogenase [acetylating] 3</fullName>
    </alternativeName>
</protein>
<comment type="catalytic activity">
    <reaction evidence="1">
        <text>acetaldehyde + NAD(+) + CoA = acetyl-CoA + NADH + H(+)</text>
        <dbReference type="Rhea" id="RHEA:23288"/>
        <dbReference type="ChEBI" id="CHEBI:15343"/>
        <dbReference type="ChEBI" id="CHEBI:15378"/>
        <dbReference type="ChEBI" id="CHEBI:57287"/>
        <dbReference type="ChEBI" id="CHEBI:57288"/>
        <dbReference type="ChEBI" id="CHEBI:57540"/>
        <dbReference type="ChEBI" id="CHEBI:57945"/>
        <dbReference type="EC" id="1.2.1.10"/>
    </reaction>
</comment>
<comment type="similarity">
    <text evidence="1">Belongs to the acetaldehyde dehydrogenase family.</text>
</comment>
<organism>
    <name type="scientific">Dechloromonas aromatica (strain RCB)</name>
    <dbReference type="NCBI Taxonomy" id="159087"/>
    <lineage>
        <taxon>Bacteria</taxon>
        <taxon>Pseudomonadati</taxon>
        <taxon>Pseudomonadota</taxon>
        <taxon>Betaproteobacteria</taxon>
        <taxon>Rhodocyclales</taxon>
        <taxon>Azonexaceae</taxon>
        <taxon>Dechloromonas</taxon>
    </lineage>
</organism>